<organism>
    <name type="scientific">Prochlorococcus marinus (strain MIT 9515)</name>
    <dbReference type="NCBI Taxonomy" id="167542"/>
    <lineage>
        <taxon>Bacteria</taxon>
        <taxon>Bacillati</taxon>
        <taxon>Cyanobacteriota</taxon>
        <taxon>Cyanophyceae</taxon>
        <taxon>Synechococcales</taxon>
        <taxon>Prochlorococcaceae</taxon>
        <taxon>Prochlorococcus</taxon>
    </lineage>
</organism>
<reference key="1">
    <citation type="journal article" date="2007" name="PLoS Genet.">
        <title>Patterns and implications of gene gain and loss in the evolution of Prochlorococcus.</title>
        <authorList>
            <person name="Kettler G.C."/>
            <person name="Martiny A.C."/>
            <person name="Huang K."/>
            <person name="Zucker J."/>
            <person name="Coleman M.L."/>
            <person name="Rodrigue S."/>
            <person name="Chen F."/>
            <person name="Lapidus A."/>
            <person name="Ferriera S."/>
            <person name="Johnson J."/>
            <person name="Steglich C."/>
            <person name="Church G.M."/>
            <person name="Richardson P."/>
            <person name="Chisholm S.W."/>
        </authorList>
    </citation>
    <scope>NUCLEOTIDE SEQUENCE [LARGE SCALE GENOMIC DNA]</scope>
    <source>
        <strain>MIT 9515</strain>
    </source>
</reference>
<gene>
    <name evidence="1" type="primary">rplK</name>
    <name evidence="1" type="synonym">rpl11</name>
    <name type="ordered locus">P9515_02331</name>
</gene>
<name>RL11_PROM5</name>
<evidence type="ECO:0000255" key="1">
    <source>
        <dbReference type="HAMAP-Rule" id="MF_00736"/>
    </source>
</evidence>
<evidence type="ECO:0000305" key="2"/>
<keyword id="KW-0488">Methylation</keyword>
<keyword id="KW-0687">Ribonucleoprotein</keyword>
<keyword id="KW-0689">Ribosomal protein</keyword>
<keyword id="KW-0694">RNA-binding</keyword>
<keyword id="KW-0699">rRNA-binding</keyword>
<comment type="function">
    <text evidence="1">Forms part of the ribosomal stalk which helps the ribosome interact with GTP-bound translation factors.</text>
</comment>
<comment type="subunit">
    <text evidence="1">Part of the ribosomal stalk of the 50S ribosomal subunit. Interacts with L10 and the large rRNA to form the base of the stalk. L10 forms an elongated spine to which L12 dimers bind in a sequential fashion forming a multimeric L10(L12)X complex.</text>
</comment>
<comment type="PTM">
    <text evidence="1">One or more lysine residues are methylated.</text>
</comment>
<comment type="similarity">
    <text evidence="1">Belongs to the universal ribosomal protein uL11 family.</text>
</comment>
<accession>A2BUI1</accession>
<dbReference type="EMBL" id="CP000552">
    <property type="protein sequence ID" value="ABM71442.1"/>
    <property type="molecule type" value="Genomic_DNA"/>
</dbReference>
<dbReference type="RefSeq" id="WP_011819556.1">
    <property type="nucleotide sequence ID" value="NC_008817.1"/>
</dbReference>
<dbReference type="SMR" id="A2BUI1"/>
<dbReference type="STRING" id="167542.P9515_02331"/>
<dbReference type="GeneID" id="60201949"/>
<dbReference type="KEGG" id="pmc:P9515_02331"/>
<dbReference type="eggNOG" id="COG0080">
    <property type="taxonomic scope" value="Bacteria"/>
</dbReference>
<dbReference type="HOGENOM" id="CLU_074237_2_1_3"/>
<dbReference type="OrthoDB" id="9802408at2"/>
<dbReference type="Proteomes" id="UP000001589">
    <property type="component" value="Chromosome"/>
</dbReference>
<dbReference type="GO" id="GO:0022625">
    <property type="term" value="C:cytosolic large ribosomal subunit"/>
    <property type="evidence" value="ECO:0007669"/>
    <property type="project" value="TreeGrafter"/>
</dbReference>
<dbReference type="GO" id="GO:0070180">
    <property type="term" value="F:large ribosomal subunit rRNA binding"/>
    <property type="evidence" value="ECO:0007669"/>
    <property type="project" value="UniProtKB-UniRule"/>
</dbReference>
<dbReference type="GO" id="GO:0003735">
    <property type="term" value="F:structural constituent of ribosome"/>
    <property type="evidence" value="ECO:0007669"/>
    <property type="project" value="InterPro"/>
</dbReference>
<dbReference type="GO" id="GO:0006412">
    <property type="term" value="P:translation"/>
    <property type="evidence" value="ECO:0007669"/>
    <property type="project" value="UniProtKB-UniRule"/>
</dbReference>
<dbReference type="CDD" id="cd00349">
    <property type="entry name" value="Ribosomal_L11"/>
    <property type="match status" value="1"/>
</dbReference>
<dbReference type="FunFam" id="1.10.10.250:FF:000001">
    <property type="entry name" value="50S ribosomal protein L11"/>
    <property type="match status" value="1"/>
</dbReference>
<dbReference type="FunFam" id="3.30.1550.10:FF:000001">
    <property type="entry name" value="50S ribosomal protein L11"/>
    <property type="match status" value="1"/>
</dbReference>
<dbReference type="Gene3D" id="1.10.10.250">
    <property type="entry name" value="Ribosomal protein L11, C-terminal domain"/>
    <property type="match status" value="1"/>
</dbReference>
<dbReference type="Gene3D" id="3.30.1550.10">
    <property type="entry name" value="Ribosomal protein L11/L12, N-terminal domain"/>
    <property type="match status" value="1"/>
</dbReference>
<dbReference type="HAMAP" id="MF_00736">
    <property type="entry name" value="Ribosomal_uL11"/>
    <property type="match status" value="1"/>
</dbReference>
<dbReference type="InterPro" id="IPR000911">
    <property type="entry name" value="Ribosomal_uL11"/>
</dbReference>
<dbReference type="InterPro" id="IPR006519">
    <property type="entry name" value="Ribosomal_uL11_bac-typ"/>
</dbReference>
<dbReference type="InterPro" id="IPR020783">
    <property type="entry name" value="Ribosomal_uL11_C"/>
</dbReference>
<dbReference type="InterPro" id="IPR036769">
    <property type="entry name" value="Ribosomal_uL11_C_sf"/>
</dbReference>
<dbReference type="InterPro" id="IPR020785">
    <property type="entry name" value="Ribosomal_uL11_CS"/>
</dbReference>
<dbReference type="InterPro" id="IPR020784">
    <property type="entry name" value="Ribosomal_uL11_N"/>
</dbReference>
<dbReference type="InterPro" id="IPR036796">
    <property type="entry name" value="Ribosomal_uL11_N_sf"/>
</dbReference>
<dbReference type="NCBIfam" id="TIGR01632">
    <property type="entry name" value="L11_bact"/>
    <property type="match status" value="1"/>
</dbReference>
<dbReference type="PANTHER" id="PTHR11661">
    <property type="entry name" value="60S RIBOSOMAL PROTEIN L12"/>
    <property type="match status" value="1"/>
</dbReference>
<dbReference type="PANTHER" id="PTHR11661:SF1">
    <property type="entry name" value="LARGE RIBOSOMAL SUBUNIT PROTEIN UL11M"/>
    <property type="match status" value="1"/>
</dbReference>
<dbReference type="Pfam" id="PF00298">
    <property type="entry name" value="Ribosomal_L11"/>
    <property type="match status" value="1"/>
</dbReference>
<dbReference type="Pfam" id="PF03946">
    <property type="entry name" value="Ribosomal_L11_N"/>
    <property type="match status" value="1"/>
</dbReference>
<dbReference type="SMART" id="SM00649">
    <property type="entry name" value="RL11"/>
    <property type="match status" value="1"/>
</dbReference>
<dbReference type="SUPFAM" id="SSF54747">
    <property type="entry name" value="Ribosomal L11/L12e N-terminal domain"/>
    <property type="match status" value="1"/>
</dbReference>
<dbReference type="SUPFAM" id="SSF46906">
    <property type="entry name" value="Ribosomal protein L11, C-terminal domain"/>
    <property type="match status" value="1"/>
</dbReference>
<dbReference type="PROSITE" id="PS00359">
    <property type="entry name" value="RIBOSOMAL_L11"/>
    <property type="match status" value="1"/>
</dbReference>
<sequence>MAKKIVAVIKLALQAGKANPAPPVGPALGQHGVNIMAFCKEYNARTQDKAGFVIPVEISVFEDRSFTFITKTPPASVLITKAAGIEKGSGESSKGSVGNISKSQLEEIAKTKLPDLNCTSIESAMKVIEGTARNMGISITE</sequence>
<proteinExistence type="inferred from homology"/>
<protein>
    <recommendedName>
        <fullName evidence="1">Large ribosomal subunit protein uL11</fullName>
    </recommendedName>
    <alternativeName>
        <fullName evidence="2">50S ribosomal protein L11</fullName>
    </alternativeName>
</protein>
<feature type="chain" id="PRO_1000046239" description="Large ribosomal subunit protein uL11">
    <location>
        <begin position="1"/>
        <end position="141"/>
    </location>
</feature>